<feature type="chain" id="PRO_0000413013" description="Uncharacterized S-adenosylmethionine-dependent methyltransferase Rv3037c">
    <location>
        <begin position="1"/>
        <end position="358"/>
    </location>
</feature>
<proteinExistence type="inferred from homology"/>
<evidence type="ECO:0000305" key="1"/>
<sequence>MRARFGDRAPWLVETTLLRRRAAGKLGELCPNVGVSQWLFTDEALQQATAAPVARHRARRLAGRVVHDATCSIGTELAALRELAVRAVGSDIDPVRLAMARHNLAALGMEADLCRADVLHPVTRDAVVVIDPARRSNGRRRFHLADYQPGLGPLLDRYRGRDVVVKCAPGIDFEEVGRLGFEGEIEVISYRGGVREACLWSAGLAGSGIRRRASILDSGEQIGDDEPDDCGVRPAGKWIVDPDGAVVRAGLVRNYGARHGLWQLDPQIAYLSGDRLPPALRGFEVLEQLAFDERRLRQVLSALDCGAAEILVRGVAIDPDALRRRLRLRGSRPLAVVITRIGAGSLSHVTAYVCRPSR</sequence>
<organism>
    <name type="scientific">Mycobacterium tuberculosis (strain ATCC 25618 / H37Rv)</name>
    <dbReference type="NCBI Taxonomy" id="83332"/>
    <lineage>
        <taxon>Bacteria</taxon>
        <taxon>Bacillati</taxon>
        <taxon>Actinomycetota</taxon>
        <taxon>Actinomycetes</taxon>
        <taxon>Mycobacteriales</taxon>
        <taxon>Mycobacteriaceae</taxon>
        <taxon>Mycobacterium</taxon>
        <taxon>Mycobacterium tuberculosis complex</taxon>
    </lineage>
</organism>
<keyword id="KW-0489">Methyltransferase</keyword>
<keyword id="KW-1185">Reference proteome</keyword>
<keyword id="KW-0949">S-adenosyl-L-methionine</keyword>
<keyword id="KW-0808">Transferase</keyword>
<gene>
    <name type="ordered locus">Rv3037c</name>
</gene>
<accession>P9WJZ3</accession>
<accession>L0TBD0</accession>
<accession>O53284</accession>
<accession>Q7D688</accession>
<comment type="similarity">
    <text evidence="1">Belongs to the methyltransferase superfamily.</text>
</comment>
<dbReference type="EC" id="2.1.1.-"/>
<dbReference type="EMBL" id="AL123456">
    <property type="protein sequence ID" value="CCP45846.1"/>
    <property type="molecule type" value="Genomic_DNA"/>
</dbReference>
<dbReference type="PIR" id="H70859">
    <property type="entry name" value="H70859"/>
</dbReference>
<dbReference type="RefSeq" id="NP_217553.1">
    <property type="nucleotide sequence ID" value="NC_000962.3"/>
</dbReference>
<dbReference type="RefSeq" id="WP_003415940.1">
    <property type="nucleotide sequence ID" value="NC_000962.3"/>
</dbReference>
<dbReference type="SMR" id="P9WJZ3"/>
<dbReference type="STRING" id="83332.Rv3037c"/>
<dbReference type="PaxDb" id="83332-Rv3037c"/>
<dbReference type="DNASU" id="888640"/>
<dbReference type="GeneID" id="888640"/>
<dbReference type="KEGG" id="mtu:Rv3037c"/>
<dbReference type="KEGG" id="mtv:RVBD_3037c"/>
<dbReference type="TubercuList" id="Rv3037c"/>
<dbReference type="eggNOG" id="COG2263">
    <property type="taxonomic scope" value="Bacteria"/>
</dbReference>
<dbReference type="InParanoid" id="P9WJZ3"/>
<dbReference type="OrthoDB" id="9810570at2"/>
<dbReference type="PhylomeDB" id="P9WJZ3"/>
<dbReference type="Proteomes" id="UP000001584">
    <property type="component" value="Chromosome"/>
</dbReference>
<dbReference type="GO" id="GO:0008168">
    <property type="term" value="F:methyltransferase activity"/>
    <property type="evidence" value="ECO:0007669"/>
    <property type="project" value="UniProtKB-KW"/>
</dbReference>
<dbReference type="GO" id="GO:0032259">
    <property type="term" value="P:methylation"/>
    <property type="evidence" value="ECO:0007669"/>
    <property type="project" value="UniProtKB-KW"/>
</dbReference>
<dbReference type="Gene3D" id="3.40.50.150">
    <property type="entry name" value="Vaccinia Virus protein VP39"/>
    <property type="match status" value="1"/>
</dbReference>
<dbReference type="InterPro" id="IPR029063">
    <property type="entry name" value="SAM-dependent_MTases_sf"/>
</dbReference>
<dbReference type="InterPro" id="IPR041497">
    <property type="entry name" value="Thump-like"/>
</dbReference>
<dbReference type="PANTHER" id="PTHR14741">
    <property type="entry name" value="S-ADENOSYLMETHIONINE-DEPENDENT METHYLTRANSFERASE RELATED"/>
    <property type="match status" value="1"/>
</dbReference>
<dbReference type="PANTHER" id="PTHR14741:SF32">
    <property type="entry name" value="TRIMETHYLGUANOSINE SYNTHASE"/>
    <property type="match status" value="1"/>
</dbReference>
<dbReference type="Pfam" id="PF18096">
    <property type="entry name" value="Thump_like"/>
    <property type="match status" value="1"/>
</dbReference>
<dbReference type="SUPFAM" id="SSF53335">
    <property type="entry name" value="S-adenosyl-L-methionine-dependent methyltransferases"/>
    <property type="match status" value="1"/>
</dbReference>
<reference key="1">
    <citation type="journal article" date="1998" name="Nature">
        <title>Deciphering the biology of Mycobacterium tuberculosis from the complete genome sequence.</title>
        <authorList>
            <person name="Cole S.T."/>
            <person name="Brosch R."/>
            <person name="Parkhill J."/>
            <person name="Garnier T."/>
            <person name="Churcher C.M."/>
            <person name="Harris D.E."/>
            <person name="Gordon S.V."/>
            <person name="Eiglmeier K."/>
            <person name="Gas S."/>
            <person name="Barry C.E. III"/>
            <person name="Tekaia F."/>
            <person name="Badcock K."/>
            <person name="Basham D."/>
            <person name="Brown D."/>
            <person name="Chillingworth T."/>
            <person name="Connor R."/>
            <person name="Davies R.M."/>
            <person name="Devlin K."/>
            <person name="Feltwell T."/>
            <person name="Gentles S."/>
            <person name="Hamlin N."/>
            <person name="Holroyd S."/>
            <person name="Hornsby T."/>
            <person name="Jagels K."/>
            <person name="Krogh A."/>
            <person name="McLean J."/>
            <person name="Moule S."/>
            <person name="Murphy L.D."/>
            <person name="Oliver S."/>
            <person name="Osborne J."/>
            <person name="Quail M.A."/>
            <person name="Rajandream M.A."/>
            <person name="Rogers J."/>
            <person name="Rutter S."/>
            <person name="Seeger K."/>
            <person name="Skelton S."/>
            <person name="Squares S."/>
            <person name="Squares R."/>
            <person name="Sulston J.E."/>
            <person name="Taylor K."/>
            <person name="Whitehead S."/>
            <person name="Barrell B.G."/>
        </authorList>
    </citation>
    <scope>NUCLEOTIDE SEQUENCE [LARGE SCALE GENOMIC DNA]</scope>
    <source>
        <strain>ATCC 25618 / H37Rv</strain>
    </source>
</reference>
<name>Y3037_MYCTU</name>
<protein>
    <recommendedName>
        <fullName>Uncharacterized S-adenosylmethionine-dependent methyltransferase Rv3037c</fullName>
        <ecNumber>2.1.1.-</ecNumber>
    </recommendedName>
</protein>